<name>MUTS2_STRZP</name>
<evidence type="ECO:0000255" key="1">
    <source>
        <dbReference type="HAMAP-Rule" id="MF_00092"/>
    </source>
</evidence>
<protein>
    <recommendedName>
        <fullName evidence="1">Endonuclease MutS2</fullName>
        <ecNumber evidence="1">3.1.-.-</ecNumber>
    </recommendedName>
    <alternativeName>
        <fullName evidence="1">Ribosome-associated protein quality control-upstream factor</fullName>
        <shortName evidence="1">RQC-upstream factor</shortName>
        <shortName evidence="1">RqcU</shortName>
        <ecNumber evidence="1">3.6.4.-</ecNumber>
    </alternativeName>
</protein>
<dbReference type="EC" id="3.1.-.-" evidence="1"/>
<dbReference type="EC" id="3.6.4.-" evidence="1"/>
<dbReference type="EMBL" id="CP000920">
    <property type="protein sequence ID" value="ACO20777.1"/>
    <property type="molecule type" value="Genomic_DNA"/>
</dbReference>
<dbReference type="RefSeq" id="WP_001035004.1">
    <property type="nucleotide sequence ID" value="NC_012467.1"/>
</dbReference>
<dbReference type="SMR" id="C1CIQ8"/>
<dbReference type="KEGG" id="spp:SPP_0438"/>
<dbReference type="HOGENOM" id="CLU_011252_2_1_9"/>
<dbReference type="GO" id="GO:0005524">
    <property type="term" value="F:ATP binding"/>
    <property type="evidence" value="ECO:0007669"/>
    <property type="project" value="UniProtKB-UniRule"/>
</dbReference>
<dbReference type="GO" id="GO:0016887">
    <property type="term" value="F:ATP hydrolysis activity"/>
    <property type="evidence" value="ECO:0007669"/>
    <property type="project" value="InterPro"/>
</dbReference>
<dbReference type="GO" id="GO:0140664">
    <property type="term" value="F:ATP-dependent DNA damage sensor activity"/>
    <property type="evidence" value="ECO:0007669"/>
    <property type="project" value="InterPro"/>
</dbReference>
<dbReference type="GO" id="GO:0004519">
    <property type="term" value="F:endonuclease activity"/>
    <property type="evidence" value="ECO:0007669"/>
    <property type="project" value="UniProtKB-UniRule"/>
</dbReference>
<dbReference type="GO" id="GO:0030983">
    <property type="term" value="F:mismatched DNA binding"/>
    <property type="evidence" value="ECO:0007669"/>
    <property type="project" value="InterPro"/>
</dbReference>
<dbReference type="GO" id="GO:0043023">
    <property type="term" value="F:ribosomal large subunit binding"/>
    <property type="evidence" value="ECO:0007669"/>
    <property type="project" value="UniProtKB-UniRule"/>
</dbReference>
<dbReference type="GO" id="GO:0019843">
    <property type="term" value="F:rRNA binding"/>
    <property type="evidence" value="ECO:0007669"/>
    <property type="project" value="UniProtKB-UniRule"/>
</dbReference>
<dbReference type="GO" id="GO:0006298">
    <property type="term" value="P:mismatch repair"/>
    <property type="evidence" value="ECO:0007669"/>
    <property type="project" value="InterPro"/>
</dbReference>
<dbReference type="GO" id="GO:0045910">
    <property type="term" value="P:negative regulation of DNA recombination"/>
    <property type="evidence" value="ECO:0007669"/>
    <property type="project" value="InterPro"/>
</dbReference>
<dbReference type="GO" id="GO:0072344">
    <property type="term" value="P:rescue of stalled ribosome"/>
    <property type="evidence" value="ECO:0007669"/>
    <property type="project" value="UniProtKB-UniRule"/>
</dbReference>
<dbReference type="FunFam" id="3.30.1370.110:FF:000005">
    <property type="entry name" value="Endonuclease MutS2"/>
    <property type="match status" value="1"/>
</dbReference>
<dbReference type="FunFam" id="3.40.50.300:FF:000830">
    <property type="entry name" value="Endonuclease MutS2"/>
    <property type="match status" value="1"/>
</dbReference>
<dbReference type="Gene3D" id="3.30.1370.110">
    <property type="match status" value="1"/>
</dbReference>
<dbReference type="Gene3D" id="3.40.50.300">
    <property type="entry name" value="P-loop containing nucleotide triphosphate hydrolases"/>
    <property type="match status" value="1"/>
</dbReference>
<dbReference type="HAMAP" id="MF_00092">
    <property type="entry name" value="MutS2"/>
    <property type="match status" value="1"/>
</dbReference>
<dbReference type="InterPro" id="IPR000432">
    <property type="entry name" value="DNA_mismatch_repair_MutS_C"/>
</dbReference>
<dbReference type="InterPro" id="IPR007696">
    <property type="entry name" value="DNA_mismatch_repair_MutS_core"/>
</dbReference>
<dbReference type="InterPro" id="IPR036187">
    <property type="entry name" value="DNA_mismatch_repair_MutS_sf"/>
</dbReference>
<dbReference type="InterPro" id="IPR046893">
    <property type="entry name" value="MSSS"/>
</dbReference>
<dbReference type="InterPro" id="IPR045076">
    <property type="entry name" value="MutS"/>
</dbReference>
<dbReference type="InterPro" id="IPR005747">
    <property type="entry name" value="MutS2"/>
</dbReference>
<dbReference type="InterPro" id="IPR027417">
    <property type="entry name" value="P-loop_NTPase"/>
</dbReference>
<dbReference type="InterPro" id="IPR002625">
    <property type="entry name" value="Smr_dom"/>
</dbReference>
<dbReference type="InterPro" id="IPR036063">
    <property type="entry name" value="Smr_dom_sf"/>
</dbReference>
<dbReference type="NCBIfam" id="TIGR01069">
    <property type="entry name" value="mutS2"/>
    <property type="match status" value="1"/>
</dbReference>
<dbReference type="PANTHER" id="PTHR48466">
    <property type="entry name" value="OS10G0509000 PROTEIN-RELATED"/>
    <property type="match status" value="1"/>
</dbReference>
<dbReference type="PANTHER" id="PTHR48466:SF1">
    <property type="entry name" value="SMR DOMAIN-CONTAINING PROTEIN"/>
    <property type="match status" value="1"/>
</dbReference>
<dbReference type="Pfam" id="PF20297">
    <property type="entry name" value="MSSS"/>
    <property type="match status" value="1"/>
</dbReference>
<dbReference type="Pfam" id="PF00488">
    <property type="entry name" value="MutS_V"/>
    <property type="match status" value="1"/>
</dbReference>
<dbReference type="Pfam" id="PF01713">
    <property type="entry name" value="Smr"/>
    <property type="match status" value="1"/>
</dbReference>
<dbReference type="PIRSF" id="PIRSF005814">
    <property type="entry name" value="MutS_YshD"/>
    <property type="match status" value="1"/>
</dbReference>
<dbReference type="SMART" id="SM00534">
    <property type="entry name" value="MUTSac"/>
    <property type="match status" value="1"/>
</dbReference>
<dbReference type="SMART" id="SM00533">
    <property type="entry name" value="MUTSd"/>
    <property type="match status" value="1"/>
</dbReference>
<dbReference type="SMART" id="SM00463">
    <property type="entry name" value="SMR"/>
    <property type="match status" value="1"/>
</dbReference>
<dbReference type="SUPFAM" id="SSF48334">
    <property type="entry name" value="DNA repair protein MutS, domain III"/>
    <property type="match status" value="1"/>
</dbReference>
<dbReference type="SUPFAM" id="SSF52540">
    <property type="entry name" value="P-loop containing nucleoside triphosphate hydrolases"/>
    <property type="match status" value="1"/>
</dbReference>
<dbReference type="SUPFAM" id="SSF160443">
    <property type="entry name" value="SMR domain-like"/>
    <property type="match status" value="1"/>
</dbReference>
<dbReference type="PROSITE" id="PS00486">
    <property type="entry name" value="DNA_MISMATCH_REPAIR_2"/>
    <property type="match status" value="1"/>
</dbReference>
<dbReference type="PROSITE" id="PS50828">
    <property type="entry name" value="SMR"/>
    <property type="match status" value="1"/>
</dbReference>
<reference key="1">
    <citation type="journal article" date="2010" name="Genome Biol.">
        <title>Structure and dynamics of the pan-genome of Streptococcus pneumoniae and closely related species.</title>
        <authorList>
            <person name="Donati C."/>
            <person name="Hiller N.L."/>
            <person name="Tettelin H."/>
            <person name="Muzzi A."/>
            <person name="Croucher N.J."/>
            <person name="Angiuoli S.V."/>
            <person name="Oggioni M."/>
            <person name="Dunning Hotopp J.C."/>
            <person name="Hu F.Z."/>
            <person name="Riley D.R."/>
            <person name="Covacci A."/>
            <person name="Mitchell T.J."/>
            <person name="Bentley S.D."/>
            <person name="Kilian M."/>
            <person name="Ehrlich G.D."/>
            <person name="Rappuoli R."/>
            <person name="Moxon E.R."/>
            <person name="Masignani V."/>
        </authorList>
    </citation>
    <scope>NUCLEOTIDE SEQUENCE [LARGE SCALE GENOMIC DNA]</scope>
    <source>
        <strain>P1031</strain>
    </source>
</reference>
<keyword id="KW-0067">ATP-binding</keyword>
<keyword id="KW-0238">DNA-binding</keyword>
<keyword id="KW-0255">Endonuclease</keyword>
<keyword id="KW-0378">Hydrolase</keyword>
<keyword id="KW-0540">Nuclease</keyword>
<keyword id="KW-0547">Nucleotide-binding</keyword>
<keyword id="KW-0694">RNA-binding</keyword>
<keyword id="KW-0699">rRNA-binding</keyword>
<feature type="chain" id="PRO_1000118571" description="Endonuclease MutS2">
    <location>
        <begin position="1"/>
        <end position="778"/>
    </location>
</feature>
<feature type="domain" description="Smr" evidence="1">
    <location>
        <begin position="702"/>
        <end position="777"/>
    </location>
</feature>
<feature type="binding site" evidence="1">
    <location>
        <begin position="328"/>
        <end position="335"/>
    </location>
    <ligand>
        <name>ATP</name>
        <dbReference type="ChEBI" id="CHEBI:30616"/>
    </ligand>
</feature>
<sequence length="778" mass="87609">MNKKILETLEFDKVKALFEPHLLTEQGLEQLRQLAPTAKADKIKQAFAEMKEMQALFVEQPHFTILSTKEIAGVCKRLEMGADLNIEEFLLLKRVLLASRELQNFYANLENVSLEELALWFEKLHDFPQLQGNLQAFNDAGFIENFASEELARIRRKIHDSESQVRDVLQDLLKQKAQMLTEGIVASRNGRQVLPVKNTYRNKIAGVVHDISASGNTVYIEPREVVKLSEEIASLRADERYEMLRILQEISERVRPHAAEIANDAWIIGHLDLIRAKVRFIQERQAVVPQLSENQEIQLLHVCHPLVKNAVANDVYFGQDLTAIVITGPNTGGKTIMLKTLGLTQVMAQSGLPILADKGSRVGIFEEIFADIGDEQSIEQSLSTFSSHMTNIVDILGKVNQHSLLLLDELGAGTDPQEGAALAMAILEDLRLRQIKTMATTHYPELKAYGIETAFVQNASMEFDTATLRPTYRFMQGVPGRSNAFEIAKRLGLSEVIVGDASQQIDQDNDVNRIIEQLEEQTLESRKRLDNIREVEQENLKMNRALKKLYNELNREKETELNKAREQAAEIVDMALSESDQILKNLHSKSQLKPHEIIEAKAKLKKLAPEKVDLSKNKVLQKAKKKRAPKVGDDIVVLSYGQRGTLTSQLKDGRWEAQVGLIKMTLEEKEFDLVQAQQEKPVKKKQVNVVKRTSGRGPQARLDLRGKRYEEAMNELDTFIDQALLNNMAQVDIIHGIGTGVIREGVTKYLQRNKHVKSFGYAPQNAGGSGATIVTFKG</sequence>
<gene>
    <name evidence="1" type="primary">mutS2</name>
    <name evidence="1" type="synonym">rqcU</name>
    <name type="ordered locus">SPP_0438</name>
</gene>
<accession>C1CIQ8</accession>
<comment type="function">
    <text evidence="1">Endonuclease that is involved in the suppression of homologous recombination and thus may have a key role in the control of bacterial genetic diversity.</text>
</comment>
<comment type="function">
    <text evidence="1">Acts as a ribosome collision sensor, splitting the ribosome into its 2 subunits. Detects stalled/collided 70S ribosomes which it binds and splits by an ATP-hydrolysis driven conformational change. Acts upstream of the ribosome quality control system (RQC), a ribosome-associated complex that mediates the extraction of incompletely synthesized nascent chains from stalled ribosomes and their subsequent degradation. Probably generates substrates for RQC.</text>
</comment>
<comment type="subunit">
    <text evidence="1">Homodimer. Binds to stalled ribosomes, contacting rRNA.</text>
</comment>
<comment type="similarity">
    <text evidence="1">Belongs to the DNA mismatch repair MutS family. MutS2 subfamily.</text>
</comment>
<proteinExistence type="inferred from homology"/>
<organism>
    <name type="scientific">Streptococcus pneumoniae (strain P1031)</name>
    <dbReference type="NCBI Taxonomy" id="488223"/>
    <lineage>
        <taxon>Bacteria</taxon>
        <taxon>Bacillati</taxon>
        <taxon>Bacillota</taxon>
        <taxon>Bacilli</taxon>
        <taxon>Lactobacillales</taxon>
        <taxon>Streptococcaceae</taxon>
        <taxon>Streptococcus</taxon>
    </lineage>
</organism>